<protein>
    <recommendedName>
        <fullName evidence="1">Neuraminidase</fullName>
        <ecNumber evidence="1">3.2.1.18</ecNumber>
    </recommendedName>
</protein>
<organismHost>
    <name type="scientific">Aves</name>
    <dbReference type="NCBI Taxonomy" id="8782"/>
</organismHost>
<organismHost>
    <name type="scientific">Equus caballus</name>
    <name type="common">Horse</name>
    <dbReference type="NCBI Taxonomy" id="9796"/>
</organismHost>
<organismHost>
    <name type="scientific">Homo sapiens</name>
    <name type="common">Human</name>
    <dbReference type="NCBI Taxonomy" id="9606"/>
</organismHost>
<organismHost>
    <name type="scientific">Phocidae</name>
    <name type="common">true seals</name>
    <dbReference type="NCBI Taxonomy" id="9709"/>
</organismHost>
<keyword id="KW-0106">Calcium</keyword>
<keyword id="KW-1015">Disulfide bond</keyword>
<keyword id="KW-0325">Glycoprotein</keyword>
<keyword id="KW-0326">Glycosidase</keyword>
<keyword id="KW-1032">Host cell membrane</keyword>
<keyword id="KW-1043">Host membrane</keyword>
<keyword id="KW-0378">Hydrolase</keyword>
<keyword id="KW-0472">Membrane</keyword>
<keyword id="KW-0479">Metal-binding</keyword>
<keyword id="KW-0735">Signal-anchor</keyword>
<keyword id="KW-0812">Transmembrane</keyword>
<keyword id="KW-1133">Transmembrane helix</keyword>
<keyword id="KW-0946">Virion</keyword>
<comment type="function">
    <text evidence="1">Catalyzes the removal of terminal sialic acid residues from viral and cellular glycoconjugates. Cleaves off the terminal sialic acids on the glycosylated HA during virus budding to facilitate virus release. Additionally helps virus spread through the circulation by further removing sialic acids from the cell surface. These cleavages prevent self-aggregation and ensure the efficient spread of the progeny virus from cell to cell. Otherwise, infection would be limited to one round of replication. Described as a receptor-destroying enzyme because it cleaves a terminal sialic acid from the cellular receptors. May facilitate viral invasion of the upper airways by cleaving the sialic acid moieties on the mucin of the airway epithelial cells. Likely to plays a role in the budding process through its association with lipid rafts during intracellular transport. May additionally display a raft-association independent effect on budding. Plays a role in the determination of host range restriction on replication and virulence. Sialidase activity in late endosome/lysosome traffic seems to enhance virus replication.</text>
</comment>
<comment type="catalytic activity">
    <reaction evidence="1">
        <text>Hydrolysis of alpha-(2-&gt;3)-, alpha-(2-&gt;6)-, alpha-(2-&gt;8)- glycosidic linkages of terminal sialic acid residues in oligosaccharides, glycoproteins, glycolipids, colominic acid and synthetic substrates.</text>
        <dbReference type="EC" id="3.2.1.18"/>
    </reaction>
</comment>
<comment type="cofactor">
    <cofactor evidence="1">
        <name>Ca(2+)</name>
        <dbReference type="ChEBI" id="CHEBI:29108"/>
    </cofactor>
</comment>
<comment type="activity regulation">
    <text evidence="1">Inhibited by the neuraminidase inhibitors zanamivir (Relenza) and oseltamivir (Tamiflu). These drugs interfere with the release of progeny virus from infected cells and are effective against all influenza strains. Resistance to neuraminidase inhibitors is quite rare.</text>
</comment>
<comment type="subunit">
    <text evidence="1">Homotetramer.</text>
</comment>
<comment type="subcellular location">
    <subcellularLocation>
        <location evidence="1">Virion membrane</location>
    </subcellularLocation>
    <subcellularLocation>
        <location evidence="1">Host apical cell membrane</location>
        <topology evidence="1">Single-pass type II membrane protein</topology>
    </subcellularLocation>
    <text evidence="1">Preferentially accumulates at the apical plasma membrane in infected polarized epithelial cells, which is the virus assembly site. Uses lipid rafts for cell surface transport and apical sorting. In the virion, forms a mushroom-shaped spike on the surface of the membrane.</text>
</comment>
<comment type="domain">
    <text evidence="1">Intact N-terminus is essential for virion morphogenesis. Possesses two apical sorting signals, one in the ectodomain, which is likely to be a glycan, and the other in the transmembrane domain. The transmembrane domain also plays a role in lipid raft association.</text>
</comment>
<comment type="PTM">
    <text evidence="1">N-glycosylated.</text>
</comment>
<comment type="miscellaneous">
    <text>The influenza A genome consist of 8 RNA segments. Genetic variation of hemagglutinin and/or neuraminidase genes results in the emergence of new influenza strains. The mechanism of variation can be the result of point mutations or the result of genetic reassortment between segments of two different strains.</text>
</comment>
<comment type="similarity">
    <text evidence="1">Belongs to the glycosyl hydrolase 34 family.</text>
</comment>
<accession>P18881</accession>
<feature type="chain" id="PRO_0000078689" description="Neuraminidase">
    <location>
        <begin position="1"/>
        <end position="471"/>
    </location>
</feature>
<feature type="topological domain" description="Intravirion" evidence="1">
    <location>
        <begin position="1"/>
        <end position="6"/>
    </location>
</feature>
<feature type="transmembrane region" description="Helical" evidence="1">
    <location>
        <begin position="7"/>
        <end position="27"/>
    </location>
</feature>
<feature type="topological domain" description="Virion surface" evidence="1">
    <location>
        <begin position="28"/>
        <end position="471"/>
    </location>
</feature>
<feature type="region of interest" description="Involved in apical transport and lipid raft association" evidence="1">
    <location>
        <begin position="11"/>
        <end position="33"/>
    </location>
</feature>
<feature type="region of interest" description="Hypervariable stalk region" evidence="1">
    <location>
        <begin position="36"/>
        <end position="87"/>
    </location>
</feature>
<feature type="region of interest" description="Head of neuraminidase" evidence="1">
    <location>
        <begin position="90"/>
        <end position="471"/>
    </location>
</feature>
<feature type="active site" description="Proton donor/acceptor" evidence="1">
    <location>
        <position position="150"/>
    </location>
</feature>
<feature type="active site" description="Nucleophile" evidence="1">
    <location>
        <position position="405"/>
    </location>
</feature>
<feature type="binding site" evidence="1">
    <location>
        <position position="117"/>
    </location>
    <ligand>
        <name>substrate</name>
    </ligand>
</feature>
<feature type="binding site" evidence="1">
    <location>
        <position position="151"/>
    </location>
    <ligand>
        <name>substrate</name>
    </ligand>
</feature>
<feature type="binding site" evidence="1">
    <location>
        <begin position="276"/>
        <end position="277"/>
    </location>
    <ligand>
        <name>substrate</name>
    </ligand>
</feature>
<feature type="binding site" evidence="1">
    <location>
        <position position="292"/>
    </location>
    <ligand>
        <name>substrate</name>
    </ligand>
</feature>
<feature type="binding site" evidence="1">
    <location>
        <position position="293"/>
    </location>
    <ligand>
        <name>Ca(2+)</name>
        <dbReference type="ChEBI" id="CHEBI:29108"/>
    </ligand>
</feature>
<feature type="binding site" evidence="1">
    <location>
        <position position="297"/>
    </location>
    <ligand>
        <name>Ca(2+)</name>
        <dbReference type="ChEBI" id="CHEBI:29108"/>
    </ligand>
</feature>
<feature type="binding site" evidence="1">
    <location>
        <position position="324"/>
    </location>
    <ligand>
        <name>Ca(2+)</name>
        <dbReference type="ChEBI" id="CHEBI:29108"/>
    </ligand>
</feature>
<feature type="binding site" evidence="1">
    <location>
        <position position="371"/>
    </location>
    <ligand>
        <name>substrate</name>
    </ligand>
</feature>
<feature type="glycosylation site" description="N-linked (GlcNAc...) asparagine; by host" evidence="1">
    <location>
        <position position="32"/>
    </location>
</feature>
<feature type="glycosylation site" description="N-linked (GlcNAc...) asparagine; by host" evidence="1">
    <location>
        <position position="47"/>
    </location>
</feature>
<feature type="glycosylation site" description="N-linked (GlcNAc...) asparagine; by host" evidence="1">
    <location>
        <position position="56"/>
    </location>
</feature>
<feature type="glycosylation site" description="N-linked (GlcNAc...) asparagine; by host" evidence="1">
    <location>
        <position position="57"/>
    </location>
</feature>
<feature type="glycosylation site" description="N-linked (GlcNAc...) asparagine; by host" evidence="1">
    <location>
        <position position="67"/>
    </location>
</feature>
<feature type="glycosylation site" description="N-linked (GlcNAc...) asparagine; by host" evidence="1">
    <location>
        <position position="68"/>
    </location>
</feature>
<feature type="glycosylation site" description="N-linked (GlcNAc...) asparagine; by host" evidence="1">
    <location>
        <position position="87"/>
    </location>
</feature>
<feature type="glycosylation site" description="N-linked (GlcNAc...) asparagine; by host" evidence="1">
    <location>
        <position position="145"/>
    </location>
</feature>
<feature type="glycosylation site" description="N-linked (GlcNAc...) asparagine; by host" evidence="1">
    <location>
        <position position="200"/>
    </location>
</feature>
<feature type="glycosylation site" description="N-linked (GlcNAc...) asparagine; by host" evidence="1">
    <location>
        <position position="234"/>
    </location>
</feature>
<feature type="glycosylation site" description="N-linked (GlcNAc...) asparagine; by host" evidence="1">
    <location>
        <position position="401"/>
    </location>
</feature>
<feature type="disulfide bond" evidence="1">
    <location>
        <begin position="91"/>
        <end position="419"/>
    </location>
</feature>
<feature type="disulfide bond" evidence="1">
    <location>
        <begin position="123"/>
        <end position="128"/>
    </location>
</feature>
<feature type="disulfide bond" evidence="1">
    <location>
        <begin position="183"/>
        <end position="230"/>
    </location>
</feature>
<feature type="disulfide bond" evidence="1">
    <location>
        <begin position="232"/>
        <end position="237"/>
    </location>
</feature>
<feature type="disulfide bond" evidence="1">
    <location>
        <begin position="278"/>
        <end position="291"/>
    </location>
</feature>
<feature type="disulfide bond" evidence="1">
    <location>
        <begin position="280"/>
        <end position="289"/>
    </location>
</feature>
<feature type="disulfide bond" evidence="1">
    <location>
        <begin position="318"/>
        <end position="336"/>
    </location>
</feature>
<feature type="disulfide bond" evidence="1">
    <location>
        <begin position="423"/>
        <end position="450"/>
    </location>
</feature>
<evidence type="ECO:0000255" key="1">
    <source>
        <dbReference type="HAMAP-Rule" id="MF_04071"/>
    </source>
</evidence>
<reference key="1">
    <citation type="journal article" date="1988" name="Bioorg. Khim.">
        <title>Primary structure of the full-length DNA copy of the neuraminidase gene in the avian influenza virus of the N7 antigenic subtype.</title>
        <authorList>
            <person name="Grinev A.A."/>
            <person name="Petrov N.A."/>
            <person name="Golovin S.Y."/>
            <person name="Mamaev L.V."/>
            <person name="Mikriukova T.P."/>
            <person name="Netesov S.V."/>
            <person name="Vasilenko S.K."/>
        </authorList>
    </citation>
    <scope>NUCLEOTIDE SEQUENCE [GENOMIC RNA]</scope>
</reference>
<reference key="2">
    <citation type="journal article" date="2004" name="Virus Res.">
        <title>Assembly and budding of influenza virus.</title>
        <authorList>
            <person name="Nayak D.P."/>
            <person name="Hui E.K."/>
            <person name="Barman S."/>
        </authorList>
    </citation>
    <scope>REVIEW</scope>
</reference>
<reference key="3">
    <citation type="journal article" date="2005" name="N. Engl. J. Med.">
        <title>Neuraminidase inhibitors for influenza.</title>
        <authorList>
            <person name="Moscona A."/>
        </authorList>
    </citation>
    <scope>REVIEW</scope>
</reference>
<reference key="4">
    <citation type="journal article" date="2005" name="Biol. Pharm. Bull.">
        <title>Sialobiology of influenza: molecular mechanism of host range variation of influenza viruses.</title>
        <authorList>
            <person name="Suzuki Y."/>
        </authorList>
    </citation>
    <scope>REVIEW</scope>
</reference>
<gene>
    <name evidence="1" type="primary">NA</name>
</gene>
<organism>
    <name type="scientific">Influenza A virus (strain A/Chicken/Weybridge H7N7)</name>
    <name type="common">Influenza A virus (strain A/FPV/Weybridge H7N7)</name>
    <dbReference type="NCBI Taxonomy" id="11384"/>
    <lineage>
        <taxon>Viruses</taxon>
        <taxon>Riboviria</taxon>
        <taxon>Orthornavirae</taxon>
        <taxon>Negarnaviricota</taxon>
        <taxon>Polyploviricotina</taxon>
        <taxon>Insthoviricetes</taxon>
        <taxon>Articulavirales</taxon>
        <taxon>Orthomyxoviridae</taxon>
        <taxon>Alphainfluenzavirus</taxon>
        <taxon>Alphainfluenzavirus influenzae</taxon>
        <taxon>Influenza A virus</taxon>
    </lineage>
</organism>
<sequence>MNPNQKLFALSGVAIALSVLNLLIGISNVGLNVSLHLKGEGVKQENNLTCTTITQNNTTVVENTYVNNTTIINKGTNLKAPNYLLLNKSLCSVEGWVVIAKDNAIRFGESEQIIVTREPYVSCDPSGCKMYALHQGTTIRNKHSNGTIHDRTTFRGLISTPLGTPPTVSNSDFICVGWSSTSCHDGVGRMTICIQGNNDNATATVYYNRRLTTTIKTWAKNILRTQESECVCYNGTCAVVMTDGPASSQAYTKIMYFHKGLIIKEEPLRGSARHIEECSCYGHDQKVSCVCRDNWQGANRPIIEIDMSTLEHTSRCVCTGVLTDTSRPGDKPNGDCSNPITGSPGAPGVKGFGFLNGDNTWLGRTISPRSRSGFEMLKIPNAETDPNSRIIERQEIVDNSNWSGYSGSFIDCWDEANECYNPCFYVELIRGRPEEAKYVWWTSNSLIALCGSPVSVGSGSFPDGAQIQYFS</sequence>
<proteinExistence type="inferred from homology"/>
<name>NRAM_I000F</name>
<dbReference type="EC" id="3.2.1.18" evidence="1"/>
<dbReference type="EMBL" id="M38330">
    <property type="protein sequence ID" value="AAA43425.1"/>
    <property type="molecule type" value="Genomic_RNA"/>
</dbReference>
<dbReference type="SMR" id="P18881"/>
<dbReference type="CAZy" id="GH34">
    <property type="family name" value="Glycoside Hydrolase Family 34"/>
</dbReference>
<dbReference type="GlyCosmos" id="P18881">
    <property type="glycosylation" value="11 sites, No reported glycans"/>
</dbReference>
<dbReference type="GO" id="GO:0020002">
    <property type="term" value="C:host cell plasma membrane"/>
    <property type="evidence" value="ECO:0007669"/>
    <property type="project" value="UniProtKB-SubCell"/>
</dbReference>
<dbReference type="GO" id="GO:0016020">
    <property type="term" value="C:membrane"/>
    <property type="evidence" value="ECO:0007669"/>
    <property type="project" value="UniProtKB-UniRule"/>
</dbReference>
<dbReference type="GO" id="GO:0055036">
    <property type="term" value="C:virion membrane"/>
    <property type="evidence" value="ECO:0007669"/>
    <property type="project" value="UniProtKB-SubCell"/>
</dbReference>
<dbReference type="GO" id="GO:0004308">
    <property type="term" value="F:exo-alpha-sialidase activity"/>
    <property type="evidence" value="ECO:0007669"/>
    <property type="project" value="UniProtKB-UniRule"/>
</dbReference>
<dbReference type="GO" id="GO:0046872">
    <property type="term" value="F:metal ion binding"/>
    <property type="evidence" value="ECO:0007669"/>
    <property type="project" value="UniProtKB-UniRule"/>
</dbReference>
<dbReference type="GO" id="GO:0005975">
    <property type="term" value="P:carbohydrate metabolic process"/>
    <property type="evidence" value="ECO:0007669"/>
    <property type="project" value="InterPro"/>
</dbReference>
<dbReference type="GO" id="GO:0046761">
    <property type="term" value="P:viral budding from plasma membrane"/>
    <property type="evidence" value="ECO:0007669"/>
    <property type="project" value="UniProtKB-UniRule"/>
</dbReference>
<dbReference type="Gene3D" id="2.120.10.10">
    <property type="match status" value="1"/>
</dbReference>
<dbReference type="HAMAP" id="MF_04071">
    <property type="entry name" value="INFV_NRAM"/>
    <property type="match status" value="1"/>
</dbReference>
<dbReference type="InterPro" id="IPR001860">
    <property type="entry name" value="Glyco_hydro_34"/>
</dbReference>
<dbReference type="InterPro" id="IPR036278">
    <property type="entry name" value="Sialidase_sf"/>
</dbReference>
<dbReference type="Pfam" id="PF00064">
    <property type="entry name" value="Neur"/>
    <property type="match status" value="1"/>
</dbReference>
<dbReference type="SUPFAM" id="SSF50939">
    <property type="entry name" value="Sialidases"/>
    <property type="match status" value="1"/>
</dbReference>